<keyword id="KW-0227">DNA damage</keyword>
<keyword id="KW-0233">DNA recombination</keyword>
<keyword id="KW-0234">DNA repair</keyword>
<keyword id="KW-0479">Metal-binding</keyword>
<keyword id="KW-0862">Zinc</keyword>
<keyword id="KW-0863">Zinc-finger</keyword>
<feature type="chain" id="PRO_1000057149" description="Recombination protein RecR">
    <location>
        <begin position="1"/>
        <end position="198"/>
    </location>
</feature>
<feature type="domain" description="Toprim" evidence="1">
    <location>
        <begin position="80"/>
        <end position="175"/>
    </location>
</feature>
<feature type="zinc finger region" description="C4-type" evidence="1">
    <location>
        <begin position="57"/>
        <end position="72"/>
    </location>
</feature>
<evidence type="ECO:0000255" key="1">
    <source>
        <dbReference type="HAMAP-Rule" id="MF_00017"/>
    </source>
</evidence>
<proteinExistence type="inferred from homology"/>
<sequence length="198" mass="21994">MQYPEPISKLIDSFMKLPGIGPKTAVRLAFFVLSMQEDVVLDFAKALVNAKRNLTYCSVCGHITDQDPCYICEDTRRDQSVICVVQDPKDVIAMEKMKEYNGLYHVLHGAISPMDGIGPEDIKIPDLLKRLQDDQVTEVILATNPNIEGEATAMYISRLLKPSGIKLSRIAHGLPVGGDLEYADEVTLSKALEGRREM</sequence>
<name>RECR_BACP2</name>
<organism>
    <name type="scientific">Bacillus pumilus (strain SAFR-032)</name>
    <dbReference type="NCBI Taxonomy" id="315750"/>
    <lineage>
        <taxon>Bacteria</taxon>
        <taxon>Bacillati</taxon>
        <taxon>Bacillota</taxon>
        <taxon>Bacilli</taxon>
        <taxon>Bacillales</taxon>
        <taxon>Bacillaceae</taxon>
        <taxon>Bacillus</taxon>
    </lineage>
</organism>
<dbReference type="EMBL" id="CP000813">
    <property type="protein sequence ID" value="ABV61213.1"/>
    <property type="molecule type" value="Genomic_DNA"/>
</dbReference>
<dbReference type="RefSeq" id="WP_003218094.1">
    <property type="nucleotide sequence ID" value="NZ_VEIS01000032.1"/>
</dbReference>
<dbReference type="SMR" id="A8FAE6"/>
<dbReference type="STRING" id="315750.BPUM_0518"/>
<dbReference type="GeneID" id="66361617"/>
<dbReference type="KEGG" id="bpu:BPUM_0518"/>
<dbReference type="eggNOG" id="COG0353">
    <property type="taxonomic scope" value="Bacteria"/>
</dbReference>
<dbReference type="HOGENOM" id="CLU_060739_1_0_9"/>
<dbReference type="OrthoDB" id="9802672at2"/>
<dbReference type="Proteomes" id="UP000001355">
    <property type="component" value="Chromosome"/>
</dbReference>
<dbReference type="GO" id="GO:0003677">
    <property type="term" value="F:DNA binding"/>
    <property type="evidence" value="ECO:0007669"/>
    <property type="project" value="UniProtKB-UniRule"/>
</dbReference>
<dbReference type="GO" id="GO:0008270">
    <property type="term" value="F:zinc ion binding"/>
    <property type="evidence" value="ECO:0007669"/>
    <property type="project" value="UniProtKB-KW"/>
</dbReference>
<dbReference type="GO" id="GO:0006310">
    <property type="term" value="P:DNA recombination"/>
    <property type="evidence" value="ECO:0007669"/>
    <property type="project" value="UniProtKB-UniRule"/>
</dbReference>
<dbReference type="GO" id="GO:0006281">
    <property type="term" value="P:DNA repair"/>
    <property type="evidence" value="ECO:0007669"/>
    <property type="project" value="UniProtKB-UniRule"/>
</dbReference>
<dbReference type="CDD" id="cd01025">
    <property type="entry name" value="TOPRIM_recR"/>
    <property type="match status" value="1"/>
</dbReference>
<dbReference type="Gene3D" id="3.30.60.80">
    <property type="match status" value="1"/>
</dbReference>
<dbReference type="Gene3D" id="3.40.1360.10">
    <property type="match status" value="1"/>
</dbReference>
<dbReference type="Gene3D" id="6.10.250.240">
    <property type="match status" value="1"/>
</dbReference>
<dbReference type="Gene3D" id="1.10.8.420">
    <property type="entry name" value="RecR Domain 1"/>
    <property type="match status" value="1"/>
</dbReference>
<dbReference type="HAMAP" id="MF_00017">
    <property type="entry name" value="RecR"/>
    <property type="match status" value="1"/>
</dbReference>
<dbReference type="InterPro" id="IPR000093">
    <property type="entry name" value="DNA_Rcmb_RecR"/>
</dbReference>
<dbReference type="InterPro" id="IPR023627">
    <property type="entry name" value="Rcmb_RecR"/>
</dbReference>
<dbReference type="InterPro" id="IPR015967">
    <property type="entry name" value="Rcmb_RecR_Znf"/>
</dbReference>
<dbReference type="InterPro" id="IPR006171">
    <property type="entry name" value="TOPRIM_dom"/>
</dbReference>
<dbReference type="InterPro" id="IPR034137">
    <property type="entry name" value="TOPRIM_RecR"/>
</dbReference>
<dbReference type="NCBIfam" id="TIGR00615">
    <property type="entry name" value="recR"/>
    <property type="match status" value="1"/>
</dbReference>
<dbReference type="PANTHER" id="PTHR30446">
    <property type="entry name" value="RECOMBINATION PROTEIN RECR"/>
    <property type="match status" value="1"/>
</dbReference>
<dbReference type="PANTHER" id="PTHR30446:SF0">
    <property type="entry name" value="RECOMBINATION PROTEIN RECR"/>
    <property type="match status" value="1"/>
</dbReference>
<dbReference type="Pfam" id="PF21175">
    <property type="entry name" value="RecR_C"/>
    <property type="match status" value="1"/>
</dbReference>
<dbReference type="Pfam" id="PF21176">
    <property type="entry name" value="RecR_HhH"/>
    <property type="match status" value="1"/>
</dbReference>
<dbReference type="Pfam" id="PF02132">
    <property type="entry name" value="RecR_ZnF"/>
    <property type="match status" value="1"/>
</dbReference>
<dbReference type="Pfam" id="PF13662">
    <property type="entry name" value="Toprim_4"/>
    <property type="match status" value="1"/>
</dbReference>
<dbReference type="SMART" id="SM00493">
    <property type="entry name" value="TOPRIM"/>
    <property type="match status" value="1"/>
</dbReference>
<dbReference type="SUPFAM" id="SSF111304">
    <property type="entry name" value="Recombination protein RecR"/>
    <property type="match status" value="1"/>
</dbReference>
<dbReference type="PROSITE" id="PS01300">
    <property type="entry name" value="RECR"/>
    <property type="match status" value="1"/>
</dbReference>
<dbReference type="PROSITE" id="PS50880">
    <property type="entry name" value="TOPRIM"/>
    <property type="match status" value="1"/>
</dbReference>
<protein>
    <recommendedName>
        <fullName evidence="1">Recombination protein RecR</fullName>
    </recommendedName>
</protein>
<reference key="1">
    <citation type="journal article" date="2007" name="PLoS ONE">
        <title>Paradoxical DNA repair and peroxide resistance gene conservation in Bacillus pumilus SAFR-032.</title>
        <authorList>
            <person name="Gioia J."/>
            <person name="Yerrapragada S."/>
            <person name="Qin X."/>
            <person name="Jiang H."/>
            <person name="Igboeli O.C."/>
            <person name="Muzny D."/>
            <person name="Dugan-Rocha S."/>
            <person name="Ding Y."/>
            <person name="Hawes A."/>
            <person name="Liu W."/>
            <person name="Perez L."/>
            <person name="Kovar C."/>
            <person name="Dinh H."/>
            <person name="Lee S."/>
            <person name="Nazareth L."/>
            <person name="Blyth P."/>
            <person name="Holder M."/>
            <person name="Buhay C."/>
            <person name="Tirumalai M.R."/>
            <person name="Liu Y."/>
            <person name="Dasgupta I."/>
            <person name="Bokhetache L."/>
            <person name="Fujita M."/>
            <person name="Karouia F."/>
            <person name="Eswara Moorthy P."/>
            <person name="Siefert J."/>
            <person name="Uzman A."/>
            <person name="Buzumbo P."/>
            <person name="Verma A."/>
            <person name="Zwiya H."/>
            <person name="McWilliams B.D."/>
            <person name="Olowu A."/>
            <person name="Clinkenbeard K.D."/>
            <person name="Newcombe D."/>
            <person name="Golebiewski L."/>
            <person name="Petrosino J.F."/>
            <person name="Nicholson W.L."/>
            <person name="Fox G.E."/>
            <person name="Venkateswaran K."/>
            <person name="Highlander S.K."/>
            <person name="Weinstock G.M."/>
        </authorList>
    </citation>
    <scope>NUCLEOTIDE SEQUENCE [LARGE SCALE GENOMIC DNA]</scope>
    <source>
        <strain>SAFR-032</strain>
    </source>
</reference>
<accession>A8FAE6</accession>
<gene>
    <name evidence="1" type="primary">recR</name>
    <name type="ordered locus">BPUM_0518</name>
</gene>
<comment type="function">
    <text evidence="1">May play a role in DNA repair. It seems to be involved in an RecBC-independent recombinational process of DNA repair. It may act with RecF and RecO.</text>
</comment>
<comment type="similarity">
    <text evidence="1">Belongs to the RecR family.</text>
</comment>